<protein>
    <recommendedName>
        <fullName evidence="1">UPF0398 protein BH1768</fullName>
    </recommendedName>
</protein>
<dbReference type="EMBL" id="BA000004">
    <property type="protein sequence ID" value="BAB05487.1"/>
    <property type="molecule type" value="Genomic_DNA"/>
</dbReference>
<dbReference type="PIR" id="H83870">
    <property type="entry name" value="H83870"/>
</dbReference>
<dbReference type="RefSeq" id="WP_010897929.1">
    <property type="nucleotide sequence ID" value="NC_002570.2"/>
</dbReference>
<dbReference type="SMR" id="Q9KC06"/>
<dbReference type="STRING" id="272558.gene:10727666"/>
<dbReference type="KEGG" id="bha:BH1768"/>
<dbReference type="eggNOG" id="COG4474">
    <property type="taxonomic scope" value="Bacteria"/>
</dbReference>
<dbReference type="HOGENOM" id="CLU_105319_0_0_9"/>
<dbReference type="OrthoDB" id="2301957at2"/>
<dbReference type="Proteomes" id="UP000001258">
    <property type="component" value="Chromosome"/>
</dbReference>
<dbReference type="Gene3D" id="3.40.50.450">
    <property type="match status" value="1"/>
</dbReference>
<dbReference type="HAMAP" id="MF_01575">
    <property type="entry name" value="UPF0398"/>
    <property type="match status" value="1"/>
</dbReference>
<dbReference type="InterPro" id="IPR010697">
    <property type="entry name" value="YspA"/>
</dbReference>
<dbReference type="NCBIfam" id="NF010181">
    <property type="entry name" value="PRK13660.1"/>
    <property type="match status" value="1"/>
</dbReference>
<dbReference type="PANTHER" id="PTHR38440:SF1">
    <property type="entry name" value="UPF0398 PROTEIN SPR0331"/>
    <property type="match status" value="1"/>
</dbReference>
<dbReference type="PANTHER" id="PTHR38440">
    <property type="entry name" value="UPF0398 PROTEIN YPSA"/>
    <property type="match status" value="1"/>
</dbReference>
<dbReference type="Pfam" id="PF06908">
    <property type="entry name" value="YpsA"/>
    <property type="match status" value="1"/>
</dbReference>
<dbReference type="PIRSF" id="PIRSF021290">
    <property type="entry name" value="DUF1273"/>
    <property type="match status" value="1"/>
</dbReference>
<dbReference type="SUPFAM" id="SSF102405">
    <property type="entry name" value="MCP/YpsA-like"/>
    <property type="match status" value="1"/>
</dbReference>
<evidence type="ECO:0000255" key="1">
    <source>
        <dbReference type="HAMAP-Rule" id="MF_01575"/>
    </source>
</evidence>
<gene>
    <name type="ordered locus">BH1768</name>
</gene>
<reference key="1">
    <citation type="journal article" date="2000" name="Nucleic Acids Res.">
        <title>Complete genome sequence of the alkaliphilic bacterium Bacillus halodurans and genomic sequence comparison with Bacillus subtilis.</title>
        <authorList>
            <person name="Takami H."/>
            <person name="Nakasone K."/>
            <person name="Takaki Y."/>
            <person name="Maeno G."/>
            <person name="Sasaki R."/>
            <person name="Masui N."/>
            <person name="Fuji F."/>
            <person name="Hirama C."/>
            <person name="Nakamura Y."/>
            <person name="Ogasawara N."/>
            <person name="Kuhara S."/>
            <person name="Horikoshi K."/>
        </authorList>
    </citation>
    <scope>NUCLEOTIDE SEQUENCE [LARGE SCALE GENOMIC DNA]</scope>
    <source>
        <strain>ATCC BAA-125 / DSM 18197 / FERM 7344 / JCM 9153 / C-125</strain>
    </source>
</reference>
<name>Y1768_HALH5</name>
<keyword id="KW-1185">Reference proteome</keyword>
<feature type="chain" id="PRO_0000267153" description="UPF0398 protein BH1768">
    <location>
        <begin position="1"/>
        <end position="189"/>
    </location>
</feature>
<proteinExistence type="inferred from homology"/>
<accession>Q9KC06</accession>
<organism>
    <name type="scientific">Halalkalibacterium halodurans (strain ATCC BAA-125 / DSM 18197 / FERM 7344 / JCM 9153 / C-125)</name>
    <name type="common">Bacillus halodurans</name>
    <dbReference type="NCBI Taxonomy" id="272558"/>
    <lineage>
        <taxon>Bacteria</taxon>
        <taxon>Bacillati</taxon>
        <taxon>Bacillota</taxon>
        <taxon>Bacilli</taxon>
        <taxon>Bacillales</taxon>
        <taxon>Bacillaceae</taxon>
        <taxon>Halalkalibacterium (ex Joshi et al. 2022)</taxon>
    </lineage>
</organism>
<comment type="similarity">
    <text evidence="1">Belongs to the UPF0398 family.</text>
</comment>
<sequence>MKVITLTGYKAHELGIFSHNHRGITYIKKAFEQQILALIEEGVEWFLISGQLGVELWAAEVVIKLKQTHPHIQLAVLTPFLEQESQWQEASRKKYHDILEAADFVDSITKRPYEGPAQLRLKNEYLVQKSDGLLVLYDEDKPGSPSYYLEVAKKRQQQEPYDIRLITPHDLEWIAQEDEMNDSVDIDNL</sequence>